<comment type="interaction">
    <interactant intactId="EBI-10268935">
        <id>Q8NA57</id>
    </interactant>
    <interactant intactId="EBI-1057431">
        <id>O14556</id>
        <label>GAPDHS</label>
    </interactant>
    <organismsDiffer>false</organismsDiffer>
    <experiments>2</experiments>
</comment>
<comment type="interaction">
    <interactant intactId="EBI-10268935">
        <id>Q8NA57</id>
    </interactant>
    <interactant intactId="EBI-618309">
        <id>Q08379</id>
        <label>GOLGA2</label>
    </interactant>
    <organismsDiffer>false</organismsDiffer>
    <experiments>7</experiments>
</comment>
<gene>
    <name type="primary">C12orf50</name>
</gene>
<protein>
    <recommendedName>
        <fullName>Uncharacterized protein C12orf50</fullName>
    </recommendedName>
</protein>
<keyword id="KW-1185">Reference proteome</keyword>
<organism>
    <name type="scientific">Homo sapiens</name>
    <name type="common">Human</name>
    <dbReference type="NCBI Taxonomy" id="9606"/>
    <lineage>
        <taxon>Eukaryota</taxon>
        <taxon>Metazoa</taxon>
        <taxon>Chordata</taxon>
        <taxon>Craniata</taxon>
        <taxon>Vertebrata</taxon>
        <taxon>Euteleostomi</taxon>
        <taxon>Mammalia</taxon>
        <taxon>Eutheria</taxon>
        <taxon>Euarchontoglires</taxon>
        <taxon>Primates</taxon>
        <taxon>Haplorrhini</taxon>
        <taxon>Catarrhini</taxon>
        <taxon>Hominidae</taxon>
        <taxon>Homo</taxon>
    </lineage>
</organism>
<reference key="1">
    <citation type="journal article" date="2004" name="Nat. Genet.">
        <title>Complete sequencing and characterization of 21,243 full-length human cDNAs.</title>
        <authorList>
            <person name="Ota T."/>
            <person name="Suzuki Y."/>
            <person name="Nishikawa T."/>
            <person name="Otsuki T."/>
            <person name="Sugiyama T."/>
            <person name="Irie R."/>
            <person name="Wakamatsu A."/>
            <person name="Hayashi K."/>
            <person name="Sato H."/>
            <person name="Nagai K."/>
            <person name="Kimura K."/>
            <person name="Makita H."/>
            <person name="Sekine M."/>
            <person name="Obayashi M."/>
            <person name="Nishi T."/>
            <person name="Shibahara T."/>
            <person name="Tanaka T."/>
            <person name="Ishii S."/>
            <person name="Yamamoto J."/>
            <person name="Saito K."/>
            <person name="Kawai Y."/>
            <person name="Isono Y."/>
            <person name="Nakamura Y."/>
            <person name="Nagahari K."/>
            <person name="Murakami K."/>
            <person name="Yasuda T."/>
            <person name="Iwayanagi T."/>
            <person name="Wagatsuma M."/>
            <person name="Shiratori A."/>
            <person name="Sudo H."/>
            <person name="Hosoiri T."/>
            <person name="Kaku Y."/>
            <person name="Kodaira H."/>
            <person name="Kondo H."/>
            <person name="Sugawara M."/>
            <person name="Takahashi M."/>
            <person name="Kanda K."/>
            <person name="Yokoi T."/>
            <person name="Furuya T."/>
            <person name="Kikkawa E."/>
            <person name="Omura Y."/>
            <person name="Abe K."/>
            <person name="Kamihara K."/>
            <person name="Katsuta N."/>
            <person name="Sato K."/>
            <person name="Tanikawa M."/>
            <person name="Yamazaki M."/>
            <person name="Ninomiya K."/>
            <person name="Ishibashi T."/>
            <person name="Yamashita H."/>
            <person name="Murakawa K."/>
            <person name="Fujimori K."/>
            <person name="Tanai H."/>
            <person name="Kimata M."/>
            <person name="Watanabe M."/>
            <person name="Hiraoka S."/>
            <person name="Chiba Y."/>
            <person name="Ishida S."/>
            <person name="Ono Y."/>
            <person name="Takiguchi S."/>
            <person name="Watanabe S."/>
            <person name="Yosida M."/>
            <person name="Hotuta T."/>
            <person name="Kusano J."/>
            <person name="Kanehori K."/>
            <person name="Takahashi-Fujii A."/>
            <person name="Hara H."/>
            <person name="Tanase T.-O."/>
            <person name="Nomura Y."/>
            <person name="Togiya S."/>
            <person name="Komai F."/>
            <person name="Hara R."/>
            <person name="Takeuchi K."/>
            <person name="Arita M."/>
            <person name="Imose N."/>
            <person name="Musashino K."/>
            <person name="Yuuki H."/>
            <person name="Oshima A."/>
            <person name="Sasaki N."/>
            <person name="Aotsuka S."/>
            <person name="Yoshikawa Y."/>
            <person name="Matsunawa H."/>
            <person name="Ichihara T."/>
            <person name="Shiohata N."/>
            <person name="Sano S."/>
            <person name="Moriya S."/>
            <person name="Momiyama H."/>
            <person name="Satoh N."/>
            <person name="Takami S."/>
            <person name="Terashima Y."/>
            <person name="Suzuki O."/>
            <person name="Nakagawa S."/>
            <person name="Senoh A."/>
            <person name="Mizoguchi H."/>
            <person name="Goto Y."/>
            <person name="Shimizu F."/>
            <person name="Wakebe H."/>
            <person name="Hishigaki H."/>
            <person name="Watanabe T."/>
            <person name="Sugiyama A."/>
            <person name="Takemoto M."/>
            <person name="Kawakami B."/>
            <person name="Yamazaki M."/>
            <person name="Watanabe K."/>
            <person name="Kumagai A."/>
            <person name="Itakura S."/>
            <person name="Fukuzumi Y."/>
            <person name="Fujimori Y."/>
            <person name="Komiyama M."/>
            <person name="Tashiro H."/>
            <person name="Tanigami A."/>
            <person name="Fujiwara T."/>
            <person name="Ono T."/>
            <person name="Yamada K."/>
            <person name="Fujii Y."/>
            <person name="Ozaki K."/>
            <person name="Hirao M."/>
            <person name="Ohmori Y."/>
            <person name="Kawabata A."/>
            <person name="Hikiji T."/>
            <person name="Kobatake N."/>
            <person name="Inagaki H."/>
            <person name="Ikema Y."/>
            <person name="Okamoto S."/>
            <person name="Okitani R."/>
            <person name="Kawakami T."/>
            <person name="Noguchi S."/>
            <person name="Itoh T."/>
            <person name="Shigeta K."/>
            <person name="Senba T."/>
            <person name="Matsumura K."/>
            <person name="Nakajima Y."/>
            <person name="Mizuno T."/>
            <person name="Morinaga M."/>
            <person name="Sasaki M."/>
            <person name="Togashi T."/>
            <person name="Oyama M."/>
            <person name="Hata H."/>
            <person name="Watanabe M."/>
            <person name="Komatsu T."/>
            <person name="Mizushima-Sugano J."/>
            <person name="Satoh T."/>
            <person name="Shirai Y."/>
            <person name="Takahashi Y."/>
            <person name="Nakagawa K."/>
            <person name="Okumura K."/>
            <person name="Nagase T."/>
            <person name="Nomura N."/>
            <person name="Kikuchi H."/>
            <person name="Masuho Y."/>
            <person name="Yamashita R."/>
            <person name="Nakai K."/>
            <person name="Yada T."/>
            <person name="Nakamura Y."/>
            <person name="Ohara O."/>
            <person name="Isogai T."/>
            <person name="Sugano S."/>
        </authorList>
    </citation>
    <scope>NUCLEOTIDE SEQUENCE [LARGE SCALE MRNA]</scope>
    <source>
        <tissue>Testis</tissue>
    </source>
</reference>
<reference key="2">
    <citation type="journal article" date="2004" name="Genome Res.">
        <title>The status, quality, and expansion of the NIH full-length cDNA project: the Mammalian Gene Collection (MGC).</title>
        <authorList>
            <consortium name="The MGC Project Team"/>
        </authorList>
    </citation>
    <scope>NUCLEOTIDE SEQUENCE [LARGE SCALE MRNA]</scope>
    <source>
        <tissue>Brain</tissue>
    </source>
</reference>
<sequence length="414" mass="47326">MEMQQNCSISCFWETQPLGCVKISCIFYHSKPRNINGLFLPPSSNITLQKEIQEGIPLQSQSQEPLKPQENISRPIHHPLVLKTNFEEEEEVDEQNDASSLWTKTPEEIEEKRAIKEMCYKSGEYYRFHTPPDILSSKSMTPTAEKQLEKPLENGSELQEGDSLTVPTKLSQYERQGEIKTSLHGKPKTDIAAFENGGGDCYVPQRVIFLGVDESEALTEEKEITISKCSNTKDNKDSPHPKHSLTTRLVPTTHVLNATENISMKCREDPSSMNDVQPVKKPHFKGVKKRKWIYDEPQNFPNSGMQRAVQAPRPQNKMSYHRNNKNRNAENASYIHVQRDAVRTVALNAPSRSRPTHGSYNKVHANREPKPNLSPDKYTSTSYNDSAWRKRIPFSKTYSKSEKIYPEPRRNGSK</sequence>
<proteinExistence type="evidence at protein level"/>
<accession>Q8NA57</accession>
<accession>Q6P674</accession>
<evidence type="ECO:0000256" key="1">
    <source>
        <dbReference type="SAM" id="MobiDB-lite"/>
    </source>
</evidence>
<feature type="chain" id="PRO_0000295234" description="Uncharacterized protein C12orf50">
    <location>
        <begin position="1"/>
        <end position="414"/>
    </location>
</feature>
<feature type="region of interest" description="Disordered" evidence="1">
    <location>
        <begin position="136"/>
        <end position="168"/>
    </location>
</feature>
<feature type="region of interest" description="Disordered" evidence="1">
    <location>
        <begin position="297"/>
        <end position="333"/>
    </location>
</feature>
<feature type="region of interest" description="Disordered" evidence="1">
    <location>
        <begin position="346"/>
        <end position="414"/>
    </location>
</feature>
<feature type="compositionally biased region" description="Polar residues" evidence="1">
    <location>
        <begin position="350"/>
        <end position="359"/>
    </location>
</feature>
<feature type="compositionally biased region" description="Basic and acidic residues" evidence="1">
    <location>
        <begin position="399"/>
        <end position="414"/>
    </location>
</feature>
<feature type="sequence variant" id="VAR_033266" description="In dbSNP:rs10777084.">
    <original>Q</original>
    <variation>R</variation>
    <location>
        <position position="306"/>
    </location>
</feature>
<feature type="sequence variant" id="VAR_033267" description="In dbSNP:rs11104703.">
    <original>R</original>
    <variation>H</variation>
    <location>
        <position position="322"/>
    </location>
</feature>
<name>CL050_HUMAN</name>
<dbReference type="EMBL" id="AK093140">
    <property type="protein sequence ID" value="BAC04071.1"/>
    <property type="molecule type" value="mRNA"/>
</dbReference>
<dbReference type="EMBL" id="BC038413">
    <property type="protein sequence ID" value="AAH38413.1"/>
    <property type="molecule type" value="mRNA"/>
</dbReference>
<dbReference type="EMBL" id="BC062424">
    <property type="protein sequence ID" value="AAH62424.1"/>
    <property type="status" value="ALT_SEQ"/>
    <property type="molecule type" value="mRNA"/>
</dbReference>
<dbReference type="CCDS" id="CCDS9031.1"/>
<dbReference type="RefSeq" id="NP_689802.1">
    <property type="nucleotide sequence ID" value="NM_152589.3"/>
</dbReference>
<dbReference type="RefSeq" id="XP_024304634.1">
    <property type="nucleotide sequence ID" value="XM_024448866.2"/>
</dbReference>
<dbReference type="RefSeq" id="XP_054227211.1">
    <property type="nucleotide sequence ID" value="XM_054371236.1"/>
</dbReference>
<dbReference type="BioGRID" id="127758">
    <property type="interactions" value="5"/>
</dbReference>
<dbReference type="FunCoup" id="Q8NA57">
    <property type="interactions" value="4"/>
</dbReference>
<dbReference type="IntAct" id="Q8NA57">
    <property type="interactions" value="2"/>
</dbReference>
<dbReference type="STRING" id="9606.ENSP00000298699"/>
<dbReference type="iPTMnet" id="Q8NA57"/>
<dbReference type="PhosphoSitePlus" id="Q8NA57"/>
<dbReference type="BioMuta" id="C12orf50"/>
<dbReference type="PaxDb" id="9606-ENSP00000298699"/>
<dbReference type="ProteomicsDB" id="72642"/>
<dbReference type="Antibodypedia" id="44593">
    <property type="antibodies" value="80 antibodies from 15 providers"/>
</dbReference>
<dbReference type="DNASU" id="160419"/>
<dbReference type="Ensembl" id="ENST00000298699.7">
    <property type="protein sequence ID" value="ENSP00000298699.2"/>
    <property type="gene ID" value="ENSG00000165805.10"/>
</dbReference>
<dbReference type="GeneID" id="160419"/>
<dbReference type="KEGG" id="hsa:160419"/>
<dbReference type="MANE-Select" id="ENST00000298699.7">
    <property type="protein sequence ID" value="ENSP00000298699.2"/>
    <property type="RefSeq nucleotide sequence ID" value="NM_152589.3"/>
    <property type="RefSeq protein sequence ID" value="NP_689802.1"/>
</dbReference>
<dbReference type="UCSC" id="uc001tam.2">
    <property type="organism name" value="human"/>
</dbReference>
<dbReference type="AGR" id="HGNC:26665"/>
<dbReference type="CTD" id="160419"/>
<dbReference type="DisGeNET" id="160419"/>
<dbReference type="GeneCards" id="C12orf50"/>
<dbReference type="HGNC" id="HGNC:26665">
    <property type="gene designation" value="C12orf50"/>
</dbReference>
<dbReference type="HPA" id="ENSG00000165805">
    <property type="expression patterns" value="Tissue enriched (testis)"/>
</dbReference>
<dbReference type="neXtProt" id="NX_Q8NA57"/>
<dbReference type="OpenTargets" id="ENSG00000165805"/>
<dbReference type="PharmGKB" id="PA143485379"/>
<dbReference type="VEuPathDB" id="HostDB:ENSG00000165805"/>
<dbReference type="eggNOG" id="KOG4791">
    <property type="taxonomic scope" value="Eukaryota"/>
</dbReference>
<dbReference type="GeneTree" id="ENSGT00920000149095"/>
<dbReference type="HOGENOM" id="CLU_653083_0_0_1"/>
<dbReference type="InParanoid" id="Q8NA57"/>
<dbReference type="OMA" id="AIRDICY"/>
<dbReference type="OrthoDB" id="5395350at2759"/>
<dbReference type="PAN-GO" id="Q8NA57">
    <property type="GO annotations" value="2 GO annotations based on evolutionary models"/>
</dbReference>
<dbReference type="PhylomeDB" id="Q8NA57"/>
<dbReference type="TreeFam" id="TF335608"/>
<dbReference type="PathwayCommons" id="Q8NA57"/>
<dbReference type="SignaLink" id="Q8NA57"/>
<dbReference type="BioGRID-ORCS" id="160419">
    <property type="hits" value="10 hits in 1113 CRISPR screens"/>
</dbReference>
<dbReference type="GenomeRNAi" id="160419"/>
<dbReference type="Pharos" id="Q8NA57">
    <property type="development level" value="Tdark"/>
</dbReference>
<dbReference type="PRO" id="PR:Q8NA57"/>
<dbReference type="Proteomes" id="UP000005640">
    <property type="component" value="Chromosome 12"/>
</dbReference>
<dbReference type="RNAct" id="Q8NA57">
    <property type="molecule type" value="protein"/>
</dbReference>
<dbReference type="Bgee" id="ENSG00000165805">
    <property type="expression patterns" value="Expressed in sperm and 85 other cell types or tissues"/>
</dbReference>
<dbReference type="ExpressionAtlas" id="Q8NA57">
    <property type="expression patterns" value="baseline and differential"/>
</dbReference>
<dbReference type="GO" id="GO:0016973">
    <property type="term" value="P:poly(A)+ mRNA export from nucleus"/>
    <property type="evidence" value="ECO:0000318"/>
    <property type="project" value="GO_Central"/>
</dbReference>
<dbReference type="InterPro" id="IPR040943">
    <property type="entry name" value="DUF5571"/>
</dbReference>
<dbReference type="InterPro" id="IPR041686">
    <property type="entry name" value="Znf-CCCH_3"/>
</dbReference>
<dbReference type="PANTHER" id="PTHR15725:SF1">
    <property type="entry name" value="RIKEN CDNA 1700017N19 GENE"/>
    <property type="match status" value="1"/>
</dbReference>
<dbReference type="PANTHER" id="PTHR15725">
    <property type="entry name" value="ZN-FINGER, C-X8-C-X5-C-X3-H TYPE-CONTAINING"/>
    <property type="match status" value="1"/>
</dbReference>
<dbReference type="Pfam" id="PF17732">
    <property type="entry name" value="DUF5571"/>
    <property type="match status" value="1"/>
</dbReference>
<dbReference type="Pfam" id="PF15663">
    <property type="entry name" value="zf-CCCH_3"/>
    <property type="match status" value="1"/>
</dbReference>